<sequence length="437" mass="48941">MSETHLSTKKFADFPLHKEVQQALNEVGFEFCTPIQALSLPILLAKKDIAGQAQTGTGKTLAFLVATFNHLLTEAAPTERKINQPRAIIMAPTRELAIQIAKDANLLAKHTGLKVGIVYGGEGYEAQRKVLDKGIDILIGTTGRIIDYVRQGVIDVSAIQAVVLDEADRMFDLGFIKDIRFLFRRMPDAKSRLNMLFSATLSMKVQELAYDHMNEPEKVEIAPNEKTSKNIKEEIFYPSMEEKMPLLLSLLEEDWPEKAIVFSNTKHSCEKVWSWLEGDGHRVGLLTGDVPQKKRLRILEQFTSGDIDVLVATDVAARGLHIADVSHVYNYDLPDDCEDYVHRIGRTGRAGQKGVSVSFACEEYALNLPAIESYIQHSIPVTSYDSEALLDDIPAPKRIHRKPSSHSRNSRDRSGSRPQGGHRGNAPRRHDKTRRHS</sequence>
<comment type="function">
    <text evidence="1">DEAD-box RNA helicase involved in RNA degradation. Has RNA-dependent ATPase activity and unwinds double-stranded RNA.</text>
</comment>
<comment type="catalytic activity">
    <reaction evidence="1">
        <text>ATP + H2O = ADP + phosphate + H(+)</text>
        <dbReference type="Rhea" id="RHEA:13065"/>
        <dbReference type="ChEBI" id="CHEBI:15377"/>
        <dbReference type="ChEBI" id="CHEBI:15378"/>
        <dbReference type="ChEBI" id="CHEBI:30616"/>
        <dbReference type="ChEBI" id="CHEBI:43474"/>
        <dbReference type="ChEBI" id="CHEBI:456216"/>
        <dbReference type="EC" id="3.6.4.13"/>
    </reaction>
</comment>
<comment type="subunit">
    <text evidence="1">Component of the RNA degradosome, which is a multiprotein complex involved in RNA processing and mRNA degradation.</text>
</comment>
<comment type="subcellular location">
    <subcellularLocation>
        <location evidence="1">Cytoplasm</location>
    </subcellularLocation>
</comment>
<comment type="similarity">
    <text evidence="1">Belongs to the DEAD box helicase family. RhlB subfamily.</text>
</comment>
<protein>
    <recommendedName>
        <fullName evidence="1">ATP-dependent RNA helicase RhlB</fullName>
        <ecNumber evidence="1">3.6.4.13</ecNumber>
    </recommendedName>
</protein>
<feature type="chain" id="PRO_1000131308" description="ATP-dependent RNA helicase RhlB">
    <location>
        <begin position="1"/>
        <end position="437"/>
    </location>
</feature>
<feature type="domain" description="Helicase ATP-binding" evidence="1">
    <location>
        <begin position="40"/>
        <end position="219"/>
    </location>
</feature>
<feature type="domain" description="Helicase C-terminal" evidence="1">
    <location>
        <begin position="243"/>
        <end position="390"/>
    </location>
</feature>
<feature type="region of interest" description="Disordered" evidence="2">
    <location>
        <begin position="394"/>
        <end position="437"/>
    </location>
</feature>
<feature type="short sequence motif" description="Q motif">
    <location>
        <begin position="9"/>
        <end position="37"/>
    </location>
</feature>
<feature type="short sequence motif" description="DEAD box">
    <location>
        <begin position="165"/>
        <end position="168"/>
    </location>
</feature>
<feature type="compositionally biased region" description="Basic residues" evidence="2">
    <location>
        <begin position="425"/>
        <end position="437"/>
    </location>
</feature>
<feature type="binding site" evidence="1">
    <location>
        <begin position="53"/>
        <end position="60"/>
    </location>
    <ligand>
        <name>ATP</name>
        <dbReference type="ChEBI" id="CHEBI:30616"/>
    </ligand>
</feature>
<keyword id="KW-0067">ATP-binding</keyword>
<keyword id="KW-0963">Cytoplasm</keyword>
<keyword id="KW-0347">Helicase</keyword>
<keyword id="KW-0378">Hydrolase</keyword>
<keyword id="KW-0547">Nucleotide-binding</keyword>
<keyword id="KW-0694">RNA-binding</keyword>
<evidence type="ECO:0000255" key="1">
    <source>
        <dbReference type="HAMAP-Rule" id="MF_00661"/>
    </source>
</evidence>
<evidence type="ECO:0000256" key="2">
    <source>
        <dbReference type="SAM" id="MobiDB-lite"/>
    </source>
</evidence>
<dbReference type="EC" id="3.6.4.13" evidence="1"/>
<dbReference type="EMBL" id="CP000472">
    <property type="protein sequence ID" value="ACJ27267.1"/>
    <property type="molecule type" value="Genomic_DNA"/>
</dbReference>
<dbReference type="RefSeq" id="WP_020910648.1">
    <property type="nucleotide sequence ID" value="NC_011566.1"/>
</dbReference>
<dbReference type="SMR" id="B8CHZ1"/>
<dbReference type="STRING" id="225849.swp_0435"/>
<dbReference type="KEGG" id="swp:swp_0435"/>
<dbReference type="eggNOG" id="COG0513">
    <property type="taxonomic scope" value="Bacteria"/>
</dbReference>
<dbReference type="HOGENOM" id="CLU_003041_28_3_6"/>
<dbReference type="OrthoDB" id="9805696at2"/>
<dbReference type="Proteomes" id="UP000000753">
    <property type="component" value="Chromosome"/>
</dbReference>
<dbReference type="GO" id="GO:0005829">
    <property type="term" value="C:cytosol"/>
    <property type="evidence" value="ECO:0007669"/>
    <property type="project" value="TreeGrafter"/>
</dbReference>
<dbReference type="GO" id="GO:0005524">
    <property type="term" value="F:ATP binding"/>
    <property type="evidence" value="ECO:0007669"/>
    <property type="project" value="UniProtKB-UniRule"/>
</dbReference>
<dbReference type="GO" id="GO:0016887">
    <property type="term" value="F:ATP hydrolysis activity"/>
    <property type="evidence" value="ECO:0007669"/>
    <property type="project" value="RHEA"/>
</dbReference>
<dbReference type="GO" id="GO:0003723">
    <property type="term" value="F:RNA binding"/>
    <property type="evidence" value="ECO:0007669"/>
    <property type="project" value="UniProtKB-UniRule"/>
</dbReference>
<dbReference type="GO" id="GO:0003724">
    <property type="term" value="F:RNA helicase activity"/>
    <property type="evidence" value="ECO:0007669"/>
    <property type="project" value="UniProtKB-UniRule"/>
</dbReference>
<dbReference type="GO" id="GO:0006401">
    <property type="term" value="P:RNA catabolic process"/>
    <property type="evidence" value="ECO:0007669"/>
    <property type="project" value="UniProtKB-UniRule"/>
</dbReference>
<dbReference type="CDD" id="cd00268">
    <property type="entry name" value="DEADc"/>
    <property type="match status" value="1"/>
</dbReference>
<dbReference type="CDD" id="cd18787">
    <property type="entry name" value="SF2_C_DEAD"/>
    <property type="match status" value="1"/>
</dbReference>
<dbReference type="FunFam" id="3.40.50.300:FF:000312">
    <property type="entry name" value="ATP-dependent RNA helicase RhlB"/>
    <property type="match status" value="1"/>
</dbReference>
<dbReference type="Gene3D" id="3.40.50.300">
    <property type="entry name" value="P-loop containing nucleotide triphosphate hydrolases"/>
    <property type="match status" value="2"/>
</dbReference>
<dbReference type="HAMAP" id="MF_00661">
    <property type="entry name" value="DEAD_helicase_RhlB"/>
    <property type="match status" value="1"/>
</dbReference>
<dbReference type="InterPro" id="IPR011545">
    <property type="entry name" value="DEAD/DEAH_box_helicase_dom"/>
</dbReference>
<dbReference type="InterPro" id="IPR050079">
    <property type="entry name" value="DEAD_box_RNA_helicase"/>
</dbReference>
<dbReference type="InterPro" id="IPR014001">
    <property type="entry name" value="Helicase_ATP-bd"/>
</dbReference>
<dbReference type="InterPro" id="IPR001650">
    <property type="entry name" value="Helicase_C-like"/>
</dbReference>
<dbReference type="InterPro" id="IPR027417">
    <property type="entry name" value="P-loop_NTPase"/>
</dbReference>
<dbReference type="InterPro" id="IPR000629">
    <property type="entry name" value="RNA-helicase_DEAD-box_CS"/>
</dbReference>
<dbReference type="InterPro" id="IPR023554">
    <property type="entry name" value="RNA_helicase_ATP-dep_RhlB"/>
</dbReference>
<dbReference type="InterPro" id="IPR014014">
    <property type="entry name" value="RNA_helicase_DEAD_Q_motif"/>
</dbReference>
<dbReference type="NCBIfam" id="NF003419">
    <property type="entry name" value="PRK04837.1"/>
    <property type="match status" value="1"/>
</dbReference>
<dbReference type="PANTHER" id="PTHR47959:SF10">
    <property type="entry name" value="ATP-DEPENDENT RNA HELICASE RHLB"/>
    <property type="match status" value="1"/>
</dbReference>
<dbReference type="PANTHER" id="PTHR47959">
    <property type="entry name" value="ATP-DEPENDENT RNA HELICASE RHLE-RELATED"/>
    <property type="match status" value="1"/>
</dbReference>
<dbReference type="Pfam" id="PF00270">
    <property type="entry name" value="DEAD"/>
    <property type="match status" value="1"/>
</dbReference>
<dbReference type="Pfam" id="PF00271">
    <property type="entry name" value="Helicase_C"/>
    <property type="match status" value="1"/>
</dbReference>
<dbReference type="SMART" id="SM00487">
    <property type="entry name" value="DEXDc"/>
    <property type="match status" value="1"/>
</dbReference>
<dbReference type="SMART" id="SM00490">
    <property type="entry name" value="HELICc"/>
    <property type="match status" value="1"/>
</dbReference>
<dbReference type="SUPFAM" id="SSF52540">
    <property type="entry name" value="P-loop containing nucleoside triphosphate hydrolases"/>
    <property type="match status" value="1"/>
</dbReference>
<dbReference type="PROSITE" id="PS00039">
    <property type="entry name" value="DEAD_ATP_HELICASE"/>
    <property type="match status" value="1"/>
</dbReference>
<dbReference type="PROSITE" id="PS51192">
    <property type="entry name" value="HELICASE_ATP_BIND_1"/>
    <property type="match status" value="1"/>
</dbReference>
<dbReference type="PROSITE" id="PS51194">
    <property type="entry name" value="HELICASE_CTER"/>
    <property type="match status" value="1"/>
</dbReference>
<dbReference type="PROSITE" id="PS51195">
    <property type="entry name" value="Q_MOTIF"/>
    <property type="match status" value="1"/>
</dbReference>
<gene>
    <name evidence="1" type="primary">rhlB</name>
    <name type="ordered locus">swp_0435</name>
</gene>
<reference key="1">
    <citation type="journal article" date="2008" name="PLoS ONE">
        <title>Environmental adaptation: genomic analysis of the piezotolerant and psychrotolerant deep-sea iron reducing bacterium Shewanella piezotolerans WP3.</title>
        <authorList>
            <person name="Wang F."/>
            <person name="Wang J."/>
            <person name="Jian H."/>
            <person name="Zhang B."/>
            <person name="Li S."/>
            <person name="Wang F."/>
            <person name="Zeng X."/>
            <person name="Gao L."/>
            <person name="Bartlett D.H."/>
            <person name="Yu J."/>
            <person name="Hu S."/>
            <person name="Xiao X."/>
        </authorList>
    </citation>
    <scope>NUCLEOTIDE SEQUENCE [LARGE SCALE GENOMIC DNA]</scope>
    <source>
        <strain>WP3 / JCM 13877</strain>
    </source>
</reference>
<accession>B8CHZ1</accession>
<proteinExistence type="inferred from homology"/>
<organism>
    <name type="scientific">Shewanella piezotolerans (strain WP3 / JCM 13877)</name>
    <dbReference type="NCBI Taxonomy" id="225849"/>
    <lineage>
        <taxon>Bacteria</taxon>
        <taxon>Pseudomonadati</taxon>
        <taxon>Pseudomonadota</taxon>
        <taxon>Gammaproteobacteria</taxon>
        <taxon>Alteromonadales</taxon>
        <taxon>Shewanellaceae</taxon>
        <taxon>Shewanella</taxon>
    </lineage>
</organism>
<name>RHLB_SHEPW</name>